<keyword id="KW-0044">Antibiotic</keyword>
<keyword id="KW-0929">Antimicrobial</keyword>
<keyword id="KW-0903">Direct protein sequencing</keyword>
<keyword id="KW-1015">Disulfide bond</keyword>
<keyword id="KW-0295">Fungicide</keyword>
<sequence>VAKCTEESGGKYFVFCCYKPTRICYMNEQKCESTCIGK</sequence>
<accession>B3EWQ1</accession>
<dbReference type="GO" id="GO:0050832">
    <property type="term" value="P:defense response to fungus"/>
    <property type="evidence" value="ECO:0000314"/>
    <property type="project" value="UniProtKB"/>
</dbReference>
<dbReference type="GO" id="GO:0050829">
    <property type="term" value="P:defense response to Gram-negative bacterium"/>
    <property type="evidence" value="ECO:0000314"/>
    <property type="project" value="UniProtKB"/>
</dbReference>
<dbReference type="GO" id="GO:0050830">
    <property type="term" value="P:defense response to Gram-positive bacterium"/>
    <property type="evidence" value="ECO:0000314"/>
    <property type="project" value="UniProtKB"/>
</dbReference>
<dbReference type="GO" id="GO:0031640">
    <property type="term" value="P:killing of cells of another organism"/>
    <property type="evidence" value="ECO:0007669"/>
    <property type="project" value="UniProtKB-KW"/>
</dbReference>
<evidence type="ECO:0000269" key="1">
    <source>
    </source>
</evidence>
<evidence type="ECO:0000303" key="2">
    <source>
    </source>
</evidence>
<evidence type="ECO:0000305" key="3"/>
<organism>
    <name type="scientific">Taraxacum officinale</name>
    <name type="common">Common dandelion</name>
    <name type="synonym">Leontodon taraxacum</name>
    <dbReference type="NCBI Taxonomy" id="50225"/>
    <lineage>
        <taxon>Eukaryota</taxon>
        <taxon>Viridiplantae</taxon>
        <taxon>Streptophyta</taxon>
        <taxon>Embryophyta</taxon>
        <taxon>Tracheophyta</taxon>
        <taxon>Spermatophyta</taxon>
        <taxon>Magnoliopsida</taxon>
        <taxon>eudicotyledons</taxon>
        <taxon>Gunneridae</taxon>
        <taxon>Pentapetalae</taxon>
        <taxon>asterids</taxon>
        <taxon>campanulids</taxon>
        <taxon>Asterales</taxon>
        <taxon>Asteraceae</taxon>
        <taxon>Cichorioideae</taxon>
        <taxon>Cichorieae</taxon>
        <taxon>Crepidinae</taxon>
        <taxon>Taraxacum</taxon>
    </lineage>
</organism>
<proteinExistence type="evidence at protein level"/>
<reference evidence="3" key="1">
    <citation type="journal article" date="2012" name="Peptides">
        <title>Discovery of novel antimicrobial peptides with unusual cysteine motifs in dandelion Taraxacum officinale Wigg. flowers.</title>
        <authorList>
            <person name="Astafieva A.A."/>
            <person name="Rogozhin E.A."/>
            <person name="Odintsova T.I."/>
            <person name="Khadeeva N.V."/>
            <person name="Grishin E.V."/>
            <person name="Egorov T.S.A."/>
        </authorList>
    </citation>
    <scope>PROTEIN SEQUENCE</scope>
    <scope>FUNCTION</scope>
    <scope>TISSUE SPECIFICITY</scope>
    <scope>DISULFIDE BOND</scope>
    <scope>MASS SPECTROMETRY</scope>
    <source>
        <tissue evidence="1">Sepal</tissue>
    </source>
</reference>
<feature type="peptide" id="PRO_0000419497" description="Antimicrobial peptide 1" evidence="1">
    <location>
        <begin position="1"/>
        <end position="38"/>
    </location>
</feature>
<protein>
    <recommendedName>
        <fullName evidence="2">Antimicrobial peptide 1</fullName>
        <shortName evidence="2">ToAMP1</shortName>
    </recommendedName>
</protein>
<name>AMP1_TAROF</name>
<comment type="function">
    <text evidence="1">Antimicrobial peptide. Active against fungal species B.cinerea (IC(50)=5.8 uM) and A.niger (IC(50)=5.6 uM) but not against F.oxysporum, F.graminearum, B.sorokinina and P.debaryanum at concentrations below 10 uM. Active against bacterial species P.syringae, B.subtilis and X.campestris.</text>
</comment>
<comment type="tissue specificity">
    <text evidence="1">Expressed in flowers but not in leaves, seeds or roots (at protein level).</text>
</comment>
<comment type="PTM">
    <text evidence="1">Disulfide bonds.</text>
</comment>
<comment type="mass spectrometry"/>